<name>YKQ3_SCHPO</name>
<proteinExistence type="predicted"/>
<feature type="chain" id="PRO_0000142372" description="Uncharacterized protein C688.03c">
    <location>
        <begin position="1"/>
        <end position="193"/>
    </location>
</feature>
<feature type="domain" description="AMMECR1" evidence="1">
    <location>
        <begin position="1"/>
        <end position="189"/>
    </location>
</feature>
<keyword id="KW-1185">Reference proteome</keyword>
<accession>Q9P6M2</accession>
<dbReference type="EMBL" id="CU329670">
    <property type="protein sequence ID" value="CAB90770.2"/>
    <property type="molecule type" value="Genomic_DNA"/>
</dbReference>
<dbReference type="RefSeq" id="NP_594062.2">
    <property type="nucleotide sequence ID" value="NM_001019486.2"/>
</dbReference>
<dbReference type="SMR" id="Q9P6M2"/>
<dbReference type="BioGRID" id="279900">
    <property type="interactions" value="5"/>
</dbReference>
<dbReference type="FunCoup" id="Q9P6M2">
    <property type="interactions" value="607"/>
</dbReference>
<dbReference type="STRING" id="284812.Q9P6M2"/>
<dbReference type="PaxDb" id="4896-SPAC688.03c.1"/>
<dbReference type="EnsemblFungi" id="SPAC688.03c.1">
    <property type="protein sequence ID" value="SPAC688.03c.1:pep"/>
    <property type="gene ID" value="SPAC688.03c"/>
</dbReference>
<dbReference type="KEGG" id="spo:2543480"/>
<dbReference type="PomBase" id="SPAC688.03c"/>
<dbReference type="VEuPathDB" id="FungiDB:SPAC688.03c"/>
<dbReference type="eggNOG" id="KOG3274">
    <property type="taxonomic scope" value="Eukaryota"/>
</dbReference>
<dbReference type="HOGENOM" id="CLU_052828_1_0_1"/>
<dbReference type="InParanoid" id="Q9P6M2"/>
<dbReference type="OMA" id="TNEAFPL"/>
<dbReference type="PRO" id="PR:Q9P6M2"/>
<dbReference type="Proteomes" id="UP000002485">
    <property type="component" value="Chromosome I"/>
</dbReference>
<dbReference type="GO" id="GO:0005829">
    <property type="term" value="C:cytosol"/>
    <property type="evidence" value="ECO:0007005"/>
    <property type="project" value="PomBase"/>
</dbReference>
<dbReference type="GO" id="GO:0005634">
    <property type="term" value="C:nucleus"/>
    <property type="evidence" value="ECO:0007005"/>
    <property type="project" value="PomBase"/>
</dbReference>
<dbReference type="Gene3D" id="3.30.700.20">
    <property type="entry name" value="Hypothetical protein ph0010, domain 1"/>
    <property type="match status" value="1"/>
</dbReference>
<dbReference type="InterPro" id="IPR023473">
    <property type="entry name" value="AMMECR1"/>
</dbReference>
<dbReference type="InterPro" id="IPR036071">
    <property type="entry name" value="AMMECR1_dom_sf"/>
</dbReference>
<dbReference type="InterPro" id="IPR002733">
    <property type="entry name" value="AMMECR1_domain"/>
</dbReference>
<dbReference type="InterPro" id="IPR027485">
    <property type="entry name" value="AMMECR1_N"/>
</dbReference>
<dbReference type="NCBIfam" id="TIGR00296">
    <property type="entry name" value="TIGR00296 family protein"/>
    <property type="match status" value="1"/>
</dbReference>
<dbReference type="PANTHER" id="PTHR13016:SF0">
    <property type="entry name" value="AMME SYNDROME CANDIDATE GENE 1 PROTEIN"/>
    <property type="match status" value="1"/>
</dbReference>
<dbReference type="PANTHER" id="PTHR13016">
    <property type="entry name" value="AMMECR1 HOMOLOG"/>
    <property type="match status" value="1"/>
</dbReference>
<dbReference type="Pfam" id="PF01871">
    <property type="entry name" value="AMMECR1"/>
    <property type="match status" value="1"/>
</dbReference>
<dbReference type="SUPFAM" id="SSF143447">
    <property type="entry name" value="AMMECR1-like"/>
    <property type="match status" value="1"/>
</dbReference>
<dbReference type="PROSITE" id="PS51112">
    <property type="entry name" value="AMMECR1"/>
    <property type="match status" value="1"/>
</dbReference>
<organism>
    <name type="scientific">Schizosaccharomyces pombe (strain 972 / ATCC 24843)</name>
    <name type="common">Fission yeast</name>
    <dbReference type="NCBI Taxonomy" id="284812"/>
    <lineage>
        <taxon>Eukaryota</taxon>
        <taxon>Fungi</taxon>
        <taxon>Dikarya</taxon>
        <taxon>Ascomycota</taxon>
        <taxon>Taphrinomycotina</taxon>
        <taxon>Schizosaccharomycetes</taxon>
        <taxon>Schizosaccharomycetales</taxon>
        <taxon>Schizosaccharomycetaceae</taxon>
        <taxon>Schizosaccharomyces</taxon>
    </lineage>
</organism>
<evidence type="ECO:0000255" key="1">
    <source>
        <dbReference type="PROSITE-ProRule" id="PRU00467"/>
    </source>
</evidence>
<reference key="1">
    <citation type="journal article" date="2002" name="Nature">
        <title>The genome sequence of Schizosaccharomyces pombe.</title>
        <authorList>
            <person name="Wood V."/>
            <person name="Gwilliam R."/>
            <person name="Rajandream M.A."/>
            <person name="Lyne M.H."/>
            <person name="Lyne R."/>
            <person name="Stewart A."/>
            <person name="Sgouros J.G."/>
            <person name="Peat N."/>
            <person name="Hayles J."/>
            <person name="Baker S.G."/>
            <person name="Basham D."/>
            <person name="Bowman S."/>
            <person name="Brooks K."/>
            <person name="Brown D."/>
            <person name="Brown S."/>
            <person name="Chillingworth T."/>
            <person name="Churcher C.M."/>
            <person name="Collins M."/>
            <person name="Connor R."/>
            <person name="Cronin A."/>
            <person name="Davis P."/>
            <person name="Feltwell T."/>
            <person name="Fraser A."/>
            <person name="Gentles S."/>
            <person name="Goble A."/>
            <person name="Hamlin N."/>
            <person name="Harris D.E."/>
            <person name="Hidalgo J."/>
            <person name="Hodgson G."/>
            <person name="Holroyd S."/>
            <person name="Hornsby T."/>
            <person name="Howarth S."/>
            <person name="Huckle E.J."/>
            <person name="Hunt S."/>
            <person name="Jagels K."/>
            <person name="James K.D."/>
            <person name="Jones L."/>
            <person name="Jones M."/>
            <person name="Leather S."/>
            <person name="McDonald S."/>
            <person name="McLean J."/>
            <person name="Mooney P."/>
            <person name="Moule S."/>
            <person name="Mungall K.L."/>
            <person name="Murphy L.D."/>
            <person name="Niblett D."/>
            <person name="Odell C."/>
            <person name="Oliver K."/>
            <person name="O'Neil S."/>
            <person name="Pearson D."/>
            <person name="Quail M.A."/>
            <person name="Rabbinowitsch E."/>
            <person name="Rutherford K.M."/>
            <person name="Rutter S."/>
            <person name="Saunders D."/>
            <person name="Seeger K."/>
            <person name="Sharp S."/>
            <person name="Skelton J."/>
            <person name="Simmonds M.N."/>
            <person name="Squares R."/>
            <person name="Squares S."/>
            <person name="Stevens K."/>
            <person name="Taylor K."/>
            <person name="Taylor R.G."/>
            <person name="Tivey A."/>
            <person name="Walsh S.V."/>
            <person name="Warren T."/>
            <person name="Whitehead S."/>
            <person name="Woodward J.R."/>
            <person name="Volckaert G."/>
            <person name="Aert R."/>
            <person name="Robben J."/>
            <person name="Grymonprez B."/>
            <person name="Weltjens I."/>
            <person name="Vanstreels E."/>
            <person name="Rieger M."/>
            <person name="Schaefer M."/>
            <person name="Mueller-Auer S."/>
            <person name="Gabel C."/>
            <person name="Fuchs M."/>
            <person name="Duesterhoeft A."/>
            <person name="Fritzc C."/>
            <person name="Holzer E."/>
            <person name="Moestl D."/>
            <person name="Hilbert H."/>
            <person name="Borzym K."/>
            <person name="Langer I."/>
            <person name="Beck A."/>
            <person name="Lehrach H."/>
            <person name="Reinhardt R."/>
            <person name="Pohl T.M."/>
            <person name="Eger P."/>
            <person name="Zimmermann W."/>
            <person name="Wedler H."/>
            <person name="Wambutt R."/>
            <person name="Purnelle B."/>
            <person name="Goffeau A."/>
            <person name="Cadieu E."/>
            <person name="Dreano S."/>
            <person name="Gloux S."/>
            <person name="Lelaure V."/>
            <person name="Mottier S."/>
            <person name="Galibert F."/>
            <person name="Aves S.J."/>
            <person name="Xiang Z."/>
            <person name="Hunt C."/>
            <person name="Moore K."/>
            <person name="Hurst S.M."/>
            <person name="Lucas M."/>
            <person name="Rochet M."/>
            <person name="Gaillardin C."/>
            <person name="Tallada V.A."/>
            <person name="Garzon A."/>
            <person name="Thode G."/>
            <person name="Daga R.R."/>
            <person name="Cruzado L."/>
            <person name="Jimenez J."/>
            <person name="Sanchez M."/>
            <person name="del Rey F."/>
            <person name="Benito J."/>
            <person name="Dominguez A."/>
            <person name="Revuelta J.L."/>
            <person name="Moreno S."/>
            <person name="Armstrong J."/>
            <person name="Forsburg S.L."/>
            <person name="Cerutti L."/>
            <person name="Lowe T."/>
            <person name="McCombie W.R."/>
            <person name="Paulsen I."/>
            <person name="Potashkin J."/>
            <person name="Shpakovski G.V."/>
            <person name="Ussery D."/>
            <person name="Barrell B.G."/>
            <person name="Nurse P."/>
        </authorList>
    </citation>
    <scope>NUCLEOTIDE SEQUENCE [LARGE SCALE GENOMIC DNA]</scope>
    <source>
        <strain>972 / ATCC 24843</strain>
    </source>
</reference>
<reference key="2">
    <citation type="journal article" date="2011" name="Science">
        <title>Comparative functional genomics of the fission yeasts.</title>
        <authorList>
            <person name="Rhind N."/>
            <person name="Chen Z."/>
            <person name="Yassour M."/>
            <person name="Thompson D.A."/>
            <person name="Haas B.J."/>
            <person name="Habib N."/>
            <person name="Wapinski I."/>
            <person name="Roy S."/>
            <person name="Lin M.F."/>
            <person name="Heiman D.I."/>
            <person name="Young S.K."/>
            <person name="Furuya K."/>
            <person name="Guo Y."/>
            <person name="Pidoux A."/>
            <person name="Chen H.M."/>
            <person name="Robbertse B."/>
            <person name="Goldberg J.M."/>
            <person name="Aoki K."/>
            <person name="Bayne E.H."/>
            <person name="Berlin A.M."/>
            <person name="Desjardins C.A."/>
            <person name="Dobbs E."/>
            <person name="Dukaj L."/>
            <person name="Fan L."/>
            <person name="FitzGerald M.G."/>
            <person name="French C."/>
            <person name="Gujja S."/>
            <person name="Hansen K."/>
            <person name="Keifenheim D."/>
            <person name="Levin J.Z."/>
            <person name="Mosher R.A."/>
            <person name="Mueller C.A."/>
            <person name="Pfiffner J."/>
            <person name="Priest M."/>
            <person name="Russ C."/>
            <person name="Smialowska A."/>
            <person name="Swoboda P."/>
            <person name="Sykes S.M."/>
            <person name="Vaughn M."/>
            <person name="Vengrova S."/>
            <person name="Yoder R."/>
            <person name="Zeng Q."/>
            <person name="Allshire R."/>
            <person name="Baulcombe D."/>
            <person name="Birren B.W."/>
            <person name="Brown W."/>
            <person name="Ekwall K."/>
            <person name="Kellis M."/>
            <person name="Leatherwood J."/>
            <person name="Levin H."/>
            <person name="Margalit H."/>
            <person name="Martienssen R."/>
            <person name="Nieduszynski C.A."/>
            <person name="Spatafora J.W."/>
            <person name="Friedman N."/>
            <person name="Dalgaard J.Z."/>
            <person name="Baumann P."/>
            <person name="Niki H."/>
            <person name="Regev A."/>
            <person name="Nusbaum C."/>
        </authorList>
    </citation>
    <scope>REVISION OF GENE MODEL</scope>
</reference>
<gene>
    <name type="ORF">SPAC688.03c</name>
</gene>
<protein>
    <recommendedName>
        <fullName>Uncharacterized protein C688.03c</fullName>
    </recommendedName>
</protein>
<sequence length="193" mass="22234">MDKKEYCYYCFEVVAATLEHRKVRDKWNAKSWTRSIPLFVKFASGKGHDKQLRGCIGTFRARPLVTNLTYFSKQAAFCDERFRPISLGELALLECQIDLLVDFEPIDDPLDWEVGIHGVSIKFTANGIRYSSTYLPSVAAEQRWDQEETLESLIHKAGYYGSIRSLQITATRYKSLEIGCTYEEYLHNLELLG</sequence>